<reference key="1">
    <citation type="journal article" date="1986" name="Biochemistry">
        <title>Natural variation of tyrosyl-tRNA synthetase and comparison with engineered mutants.</title>
        <authorList>
            <person name="Jones M.D."/>
            <person name="Lowe D.M."/>
            <person name="Borgford T."/>
            <person name="Fersht A.R."/>
        </authorList>
    </citation>
    <scope>NUCLEOTIDE SEQUENCE [GENOMIC DNA]</scope>
</reference>
<proteinExistence type="inferred from homology"/>
<feature type="chain" id="PRO_0000055641" description="Tyrosine--tRNA ligase">
    <location>
        <begin position="1"/>
        <end position="419"/>
    </location>
</feature>
<feature type="domain" description="S4 RNA-binding" evidence="1">
    <location>
        <begin position="352"/>
        <end position="419"/>
    </location>
</feature>
<feature type="short sequence motif" description="'HIGH' region">
    <location>
        <begin position="39"/>
        <end position="48"/>
    </location>
</feature>
<feature type="short sequence motif" description="'KMSKS' region">
    <location>
        <begin position="230"/>
        <end position="234"/>
    </location>
</feature>
<feature type="binding site" evidence="1">
    <location>
        <position position="34"/>
    </location>
    <ligand>
        <name>L-tyrosine</name>
        <dbReference type="ChEBI" id="CHEBI:58315"/>
    </ligand>
</feature>
<feature type="binding site" evidence="1">
    <location>
        <position position="169"/>
    </location>
    <ligand>
        <name>L-tyrosine</name>
        <dbReference type="ChEBI" id="CHEBI:58315"/>
    </ligand>
</feature>
<feature type="binding site" evidence="1">
    <location>
        <position position="173"/>
    </location>
    <ligand>
        <name>L-tyrosine</name>
        <dbReference type="ChEBI" id="CHEBI:58315"/>
    </ligand>
</feature>
<feature type="binding site" evidence="1">
    <location>
        <position position="233"/>
    </location>
    <ligand>
        <name>ATP</name>
        <dbReference type="ChEBI" id="CHEBI:30616"/>
    </ligand>
</feature>
<protein>
    <recommendedName>
        <fullName evidence="1">Tyrosine--tRNA ligase</fullName>
        <ecNumber evidence="1">6.1.1.1</ecNumber>
    </recommendedName>
    <alternativeName>
        <fullName evidence="1">Tyrosyl-tRNA synthetase</fullName>
        <shortName evidence="1">TyrRS</shortName>
    </alternativeName>
</protein>
<gene>
    <name evidence="1" type="primary">tyrS</name>
</gene>
<sequence length="419" mass="47202">MDLLAELQWRGLVNQTTDEDGLRKLLNEERVTLYCGFDPTADSLHIGNLAAILTLRRFQQAGHRPIALVGGATGLIGDPSGKKSERTLNAKETVEAWSARIKEQLGRFLDFEADGNPAKIKNNYDWIGPLDVITFLRDVGKHFSVNYMMAKESVQSRIETGISFTEFSYMMLQAYDFLRLYETEGCRLQIGGSDQWGNITAGLELIRKTKGEARAFGLTIPLVTKADGTKFGKTESGTIWLDKEKTSPYEFYQFWINTDDRDVIRYLKYFTFLSKEEIEALEQELREAPEKRAAQKALAEEVTKLVHGEEALRQAIRISEALFSGDIANLTAAEIEQGFKDVPSFVHEGGDVPLVELLVSAGISPSKRQAREDIQNGAIYVNGERLQDVGAILTAEHRLEGRFTVIRRGKKKYYLIRYA</sequence>
<organism>
    <name type="scientific">Bacillus caldotenax</name>
    <dbReference type="NCBI Taxonomy" id="1395"/>
    <lineage>
        <taxon>Bacteria</taxon>
        <taxon>Bacillati</taxon>
        <taxon>Bacillota</taxon>
        <taxon>Bacilli</taxon>
        <taxon>Bacillales</taxon>
        <taxon>Anoxybacillaceae</taxon>
        <taxon>Geobacillus</taxon>
        <taxon>Geobacillus thermoleovorans group</taxon>
    </lineage>
</organism>
<dbReference type="EC" id="6.1.1.1" evidence="1"/>
<dbReference type="EMBL" id="M13148">
    <property type="protein sequence ID" value="AAA22877.1"/>
    <property type="molecule type" value="Genomic_DNA"/>
</dbReference>
<dbReference type="PIR" id="A01180">
    <property type="entry name" value="SYBSYX"/>
</dbReference>
<dbReference type="BMRB" id="P04077"/>
<dbReference type="SMR" id="P04077"/>
<dbReference type="GO" id="GO:0005829">
    <property type="term" value="C:cytosol"/>
    <property type="evidence" value="ECO:0007669"/>
    <property type="project" value="TreeGrafter"/>
</dbReference>
<dbReference type="GO" id="GO:0005524">
    <property type="term" value="F:ATP binding"/>
    <property type="evidence" value="ECO:0007669"/>
    <property type="project" value="UniProtKB-UniRule"/>
</dbReference>
<dbReference type="GO" id="GO:0003723">
    <property type="term" value="F:RNA binding"/>
    <property type="evidence" value="ECO:0007669"/>
    <property type="project" value="UniProtKB-KW"/>
</dbReference>
<dbReference type="GO" id="GO:0004831">
    <property type="term" value="F:tyrosine-tRNA ligase activity"/>
    <property type="evidence" value="ECO:0007669"/>
    <property type="project" value="UniProtKB-UniRule"/>
</dbReference>
<dbReference type="GO" id="GO:0006437">
    <property type="term" value="P:tyrosyl-tRNA aminoacylation"/>
    <property type="evidence" value="ECO:0007669"/>
    <property type="project" value="UniProtKB-UniRule"/>
</dbReference>
<dbReference type="CDD" id="cd00165">
    <property type="entry name" value="S4"/>
    <property type="match status" value="1"/>
</dbReference>
<dbReference type="CDD" id="cd00395">
    <property type="entry name" value="Tyr_Trp_RS_core"/>
    <property type="match status" value="1"/>
</dbReference>
<dbReference type="FunFam" id="1.10.240.10:FF:000001">
    <property type="entry name" value="Tyrosine--tRNA ligase"/>
    <property type="match status" value="1"/>
</dbReference>
<dbReference type="FunFam" id="3.10.290.10:FF:000012">
    <property type="entry name" value="Tyrosine--tRNA ligase"/>
    <property type="match status" value="1"/>
</dbReference>
<dbReference type="FunFam" id="3.40.50.620:FF:000008">
    <property type="entry name" value="Tyrosine--tRNA ligase"/>
    <property type="match status" value="1"/>
</dbReference>
<dbReference type="Gene3D" id="3.40.50.620">
    <property type="entry name" value="HUPs"/>
    <property type="match status" value="1"/>
</dbReference>
<dbReference type="Gene3D" id="3.10.290.10">
    <property type="entry name" value="RNA-binding S4 domain"/>
    <property type="match status" value="1"/>
</dbReference>
<dbReference type="Gene3D" id="1.10.240.10">
    <property type="entry name" value="Tyrosyl-Transfer RNA Synthetase"/>
    <property type="match status" value="1"/>
</dbReference>
<dbReference type="HAMAP" id="MF_02006">
    <property type="entry name" value="Tyr_tRNA_synth_type1"/>
    <property type="match status" value="1"/>
</dbReference>
<dbReference type="InterPro" id="IPR001412">
    <property type="entry name" value="aa-tRNA-synth_I_CS"/>
</dbReference>
<dbReference type="InterPro" id="IPR002305">
    <property type="entry name" value="aa-tRNA-synth_Ic"/>
</dbReference>
<dbReference type="InterPro" id="IPR014729">
    <property type="entry name" value="Rossmann-like_a/b/a_fold"/>
</dbReference>
<dbReference type="InterPro" id="IPR002942">
    <property type="entry name" value="S4_RNA-bd"/>
</dbReference>
<dbReference type="InterPro" id="IPR036986">
    <property type="entry name" value="S4_RNA-bd_sf"/>
</dbReference>
<dbReference type="InterPro" id="IPR054608">
    <property type="entry name" value="SYY-like_C"/>
</dbReference>
<dbReference type="InterPro" id="IPR002307">
    <property type="entry name" value="Tyr-tRNA-ligase"/>
</dbReference>
<dbReference type="InterPro" id="IPR024088">
    <property type="entry name" value="Tyr-tRNA-ligase_bac-type"/>
</dbReference>
<dbReference type="InterPro" id="IPR024107">
    <property type="entry name" value="Tyr-tRNA-ligase_bac_1"/>
</dbReference>
<dbReference type="NCBIfam" id="TIGR00234">
    <property type="entry name" value="tyrS"/>
    <property type="match status" value="1"/>
</dbReference>
<dbReference type="PANTHER" id="PTHR11766:SF0">
    <property type="entry name" value="TYROSINE--TRNA LIGASE, MITOCHONDRIAL"/>
    <property type="match status" value="1"/>
</dbReference>
<dbReference type="PANTHER" id="PTHR11766">
    <property type="entry name" value="TYROSYL-TRNA SYNTHETASE"/>
    <property type="match status" value="1"/>
</dbReference>
<dbReference type="Pfam" id="PF22421">
    <property type="entry name" value="SYY_C-terminal"/>
    <property type="match status" value="1"/>
</dbReference>
<dbReference type="Pfam" id="PF00579">
    <property type="entry name" value="tRNA-synt_1b"/>
    <property type="match status" value="1"/>
</dbReference>
<dbReference type="PRINTS" id="PR01040">
    <property type="entry name" value="TRNASYNTHTYR"/>
</dbReference>
<dbReference type="SMART" id="SM00363">
    <property type="entry name" value="S4"/>
    <property type="match status" value="1"/>
</dbReference>
<dbReference type="SUPFAM" id="SSF55174">
    <property type="entry name" value="Alpha-L RNA-binding motif"/>
    <property type="match status" value="1"/>
</dbReference>
<dbReference type="SUPFAM" id="SSF52374">
    <property type="entry name" value="Nucleotidylyl transferase"/>
    <property type="match status" value="1"/>
</dbReference>
<dbReference type="PROSITE" id="PS00178">
    <property type="entry name" value="AA_TRNA_LIGASE_I"/>
    <property type="match status" value="1"/>
</dbReference>
<dbReference type="PROSITE" id="PS50889">
    <property type="entry name" value="S4"/>
    <property type="match status" value="1"/>
</dbReference>
<accession>P04077</accession>
<name>SYY_BACCA</name>
<evidence type="ECO:0000255" key="1">
    <source>
        <dbReference type="HAMAP-Rule" id="MF_02006"/>
    </source>
</evidence>
<comment type="function">
    <text evidence="1">Catalyzes the attachment of tyrosine to tRNA(Tyr) in a two-step reaction: tyrosine is first activated by ATP to form Tyr-AMP and then transferred to the acceptor end of tRNA(Tyr).</text>
</comment>
<comment type="catalytic activity">
    <reaction evidence="1">
        <text>tRNA(Tyr) + L-tyrosine + ATP = L-tyrosyl-tRNA(Tyr) + AMP + diphosphate + H(+)</text>
        <dbReference type="Rhea" id="RHEA:10220"/>
        <dbReference type="Rhea" id="RHEA-COMP:9706"/>
        <dbReference type="Rhea" id="RHEA-COMP:9707"/>
        <dbReference type="ChEBI" id="CHEBI:15378"/>
        <dbReference type="ChEBI" id="CHEBI:30616"/>
        <dbReference type="ChEBI" id="CHEBI:33019"/>
        <dbReference type="ChEBI" id="CHEBI:58315"/>
        <dbReference type="ChEBI" id="CHEBI:78442"/>
        <dbReference type="ChEBI" id="CHEBI:78536"/>
        <dbReference type="ChEBI" id="CHEBI:456215"/>
        <dbReference type="EC" id="6.1.1.1"/>
    </reaction>
</comment>
<comment type="subunit">
    <text>Homodimer.</text>
</comment>
<comment type="subcellular location">
    <subcellularLocation>
        <location>Cytoplasm</location>
    </subcellularLocation>
</comment>
<comment type="similarity">
    <text evidence="1">Belongs to the class-I aminoacyl-tRNA synthetase family. TyrS type 1 subfamily.</text>
</comment>
<keyword id="KW-0030">Aminoacyl-tRNA synthetase</keyword>
<keyword id="KW-0067">ATP-binding</keyword>
<keyword id="KW-0963">Cytoplasm</keyword>
<keyword id="KW-0436">Ligase</keyword>
<keyword id="KW-0547">Nucleotide-binding</keyword>
<keyword id="KW-0648">Protein biosynthesis</keyword>
<keyword id="KW-0694">RNA-binding</keyword>